<sequence>MTDISAVAGQPALVRNELNLVWLDMEMTGLDPDTDRIIEIAVVVTNSTLDIAVEGPVLAIHQSDETLAKMDDWNKNTHGRSGLIDRVRASSVTEADAAAQIAAFLARHVPPGKSPMCGNSICQDRRFMARWMPELERFFHYRNLDVSTLKELCRRWQPAIYKGFQKRAMHTALADIHESIDELKYYRERFLIPAAPAGETA</sequence>
<dbReference type="EC" id="3.1.15.-" evidence="1"/>
<dbReference type="EMBL" id="CP000572">
    <property type="protein sequence ID" value="ABN89005.1"/>
    <property type="molecule type" value="Genomic_DNA"/>
</dbReference>
<dbReference type="RefSeq" id="WP_004535917.1">
    <property type="nucleotide sequence ID" value="NC_009076.1"/>
</dbReference>
<dbReference type="SMR" id="A3NXT2"/>
<dbReference type="GeneID" id="93061069"/>
<dbReference type="KEGG" id="bpl:BURPS1106A_2908"/>
<dbReference type="HOGENOM" id="CLU_064761_2_0_4"/>
<dbReference type="Proteomes" id="UP000006738">
    <property type="component" value="Chromosome I"/>
</dbReference>
<dbReference type="GO" id="GO:0005737">
    <property type="term" value="C:cytoplasm"/>
    <property type="evidence" value="ECO:0007669"/>
    <property type="project" value="UniProtKB-SubCell"/>
</dbReference>
<dbReference type="GO" id="GO:0000175">
    <property type="term" value="F:3'-5'-RNA exonuclease activity"/>
    <property type="evidence" value="ECO:0007669"/>
    <property type="project" value="InterPro"/>
</dbReference>
<dbReference type="GO" id="GO:0003676">
    <property type="term" value="F:nucleic acid binding"/>
    <property type="evidence" value="ECO:0007669"/>
    <property type="project" value="InterPro"/>
</dbReference>
<dbReference type="GO" id="GO:0006259">
    <property type="term" value="P:DNA metabolic process"/>
    <property type="evidence" value="ECO:0007669"/>
    <property type="project" value="UniProtKB-ARBA"/>
</dbReference>
<dbReference type="CDD" id="cd06135">
    <property type="entry name" value="Orn"/>
    <property type="match status" value="1"/>
</dbReference>
<dbReference type="FunFam" id="3.30.420.10:FF:000003">
    <property type="entry name" value="Oligoribonuclease"/>
    <property type="match status" value="1"/>
</dbReference>
<dbReference type="Gene3D" id="3.30.420.10">
    <property type="entry name" value="Ribonuclease H-like superfamily/Ribonuclease H"/>
    <property type="match status" value="1"/>
</dbReference>
<dbReference type="HAMAP" id="MF_00045">
    <property type="entry name" value="Oligoribonuclease"/>
    <property type="match status" value="1"/>
</dbReference>
<dbReference type="InterPro" id="IPR013520">
    <property type="entry name" value="Exonuclease_RNaseT/DNA_pol3"/>
</dbReference>
<dbReference type="InterPro" id="IPR022894">
    <property type="entry name" value="Oligoribonuclease"/>
</dbReference>
<dbReference type="InterPro" id="IPR012337">
    <property type="entry name" value="RNaseH-like_sf"/>
</dbReference>
<dbReference type="InterPro" id="IPR036397">
    <property type="entry name" value="RNaseH_sf"/>
</dbReference>
<dbReference type="NCBIfam" id="NF003765">
    <property type="entry name" value="PRK05359.1"/>
    <property type="match status" value="1"/>
</dbReference>
<dbReference type="PANTHER" id="PTHR11046">
    <property type="entry name" value="OLIGORIBONUCLEASE, MITOCHONDRIAL"/>
    <property type="match status" value="1"/>
</dbReference>
<dbReference type="PANTHER" id="PTHR11046:SF0">
    <property type="entry name" value="OLIGORIBONUCLEASE, MITOCHONDRIAL"/>
    <property type="match status" value="1"/>
</dbReference>
<dbReference type="Pfam" id="PF00929">
    <property type="entry name" value="RNase_T"/>
    <property type="match status" value="1"/>
</dbReference>
<dbReference type="SMART" id="SM00479">
    <property type="entry name" value="EXOIII"/>
    <property type="match status" value="1"/>
</dbReference>
<dbReference type="SUPFAM" id="SSF53098">
    <property type="entry name" value="Ribonuclease H-like"/>
    <property type="match status" value="1"/>
</dbReference>
<name>ORN_BURP0</name>
<proteinExistence type="inferred from homology"/>
<evidence type="ECO:0000255" key="1">
    <source>
        <dbReference type="HAMAP-Rule" id="MF_00045"/>
    </source>
</evidence>
<gene>
    <name evidence="1" type="primary">orn</name>
    <name type="ordered locus">BURPS1106A_2908</name>
</gene>
<comment type="function">
    <text evidence="1">3'-to-5' exoribonuclease specific for small oligoribonucleotides.</text>
</comment>
<comment type="subcellular location">
    <subcellularLocation>
        <location evidence="1">Cytoplasm</location>
    </subcellularLocation>
</comment>
<comment type="similarity">
    <text evidence="1">Belongs to the oligoribonuclease family.</text>
</comment>
<keyword id="KW-0963">Cytoplasm</keyword>
<keyword id="KW-0269">Exonuclease</keyword>
<keyword id="KW-0378">Hydrolase</keyword>
<keyword id="KW-0540">Nuclease</keyword>
<protein>
    <recommendedName>
        <fullName evidence="1">Oligoribonuclease</fullName>
        <ecNumber evidence="1">3.1.15.-</ecNumber>
    </recommendedName>
</protein>
<feature type="chain" id="PRO_1000004238" description="Oligoribonuclease">
    <location>
        <begin position="1"/>
        <end position="201"/>
    </location>
</feature>
<feature type="domain" description="Exonuclease" evidence="1">
    <location>
        <begin position="20"/>
        <end position="183"/>
    </location>
</feature>
<feature type="active site" evidence="1">
    <location>
        <position position="141"/>
    </location>
</feature>
<reference key="1">
    <citation type="journal article" date="2010" name="Genome Biol. Evol.">
        <title>Continuing evolution of Burkholderia mallei through genome reduction and large-scale rearrangements.</title>
        <authorList>
            <person name="Losada L."/>
            <person name="Ronning C.M."/>
            <person name="DeShazer D."/>
            <person name="Woods D."/>
            <person name="Fedorova N."/>
            <person name="Kim H.S."/>
            <person name="Shabalina S.A."/>
            <person name="Pearson T.R."/>
            <person name="Brinkac L."/>
            <person name="Tan P."/>
            <person name="Nandi T."/>
            <person name="Crabtree J."/>
            <person name="Badger J."/>
            <person name="Beckstrom-Sternberg S."/>
            <person name="Saqib M."/>
            <person name="Schutzer S.E."/>
            <person name="Keim P."/>
            <person name="Nierman W.C."/>
        </authorList>
    </citation>
    <scope>NUCLEOTIDE SEQUENCE [LARGE SCALE GENOMIC DNA]</scope>
    <source>
        <strain>1106a</strain>
    </source>
</reference>
<accession>A3NXT2</accession>
<organism>
    <name type="scientific">Burkholderia pseudomallei (strain 1106a)</name>
    <dbReference type="NCBI Taxonomy" id="357348"/>
    <lineage>
        <taxon>Bacteria</taxon>
        <taxon>Pseudomonadati</taxon>
        <taxon>Pseudomonadota</taxon>
        <taxon>Betaproteobacteria</taxon>
        <taxon>Burkholderiales</taxon>
        <taxon>Burkholderiaceae</taxon>
        <taxon>Burkholderia</taxon>
        <taxon>pseudomallei group</taxon>
    </lineage>
</organism>